<feature type="chain" id="PRO_0000289038" description="Cytochrome b6-f complex subunit 5">
    <location>
        <begin position="1"/>
        <end position="37"/>
    </location>
</feature>
<feature type="transmembrane region" description="Helical" evidence="1">
    <location>
        <begin position="5"/>
        <end position="25"/>
    </location>
</feature>
<reference key="1">
    <citation type="journal article" date="2004" name="Plant Physiol.">
        <title>A comparison of rice chloroplast genomes.</title>
        <authorList>
            <person name="Tang J."/>
            <person name="Xia H."/>
            <person name="Cao M."/>
            <person name="Zhang X."/>
            <person name="Zeng W."/>
            <person name="Hu S."/>
            <person name="Tong W."/>
            <person name="Wang J."/>
            <person name="Wang J."/>
            <person name="Yu J."/>
            <person name="Yang H."/>
            <person name="Zhu L."/>
        </authorList>
    </citation>
    <scope>NUCLEOTIDE SEQUENCE [LARGE SCALE GENOMIC DNA]</scope>
    <source>
        <strain>cv. 93-11</strain>
    </source>
</reference>
<gene>
    <name evidence="1" type="primary">petG</name>
    <name type="synonym">petE</name>
    <name type="ORF">9311080</name>
</gene>
<geneLocation type="chloroplast"/>
<dbReference type="EMBL" id="AY522329">
    <property type="protein sequence ID" value="AAS46067.1"/>
    <property type="status" value="ALT_INIT"/>
    <property type="molecule type" value="Genomic_DNA"/>
</dbReference>
<dbReference type="RefSeq" id="YP_009161383.1">
    <property type="nucleotide sequence ID" value="NC_027678.1"/>
</dbReference>
<dbReference type="RefSeq" id="YP_654227.1">
    <property type="nucleotide sequence ID" value="NC_008155.1"/>
</dbReference>
<dbReference type="SMR" id="P0C391"/>
<dbReference type="STRING" id="39946.P0C391"/>
<dbReference type="GeneID" id="4126891"/>
<dbReference type="Proteomes" id="UP000007015">
    <property type="component" value="Chloroplast"/>
</dbReference>
<dbReference type="GO" id="GO:0009535">
    <property type="term" value="C:chloroplast thylakoid membrane"/>
    <property type="evidence" value="ECO:0007669"/>
    <property type="project" value="UniProtKB-SubCell"/>
</dbReference>
<dbReference type="GO" id="GO:0009512">
    <property type="term" value="C:cytochrome b6f complex"/>
    <property type="evidence" value="ECO:0007669"/>
    <property type="project" value="InterPro"/>
</dbReference>
<dbReference type="GO" id="GO:0009536">
    <property type="term" value="C:plastid"/>
    <property type="evidence" value="ECO:0000305"/>
    <property type="project" value="Gramene"/>
</dbReference>
<dbReference type="GO" id="GO:0045158">
    <property type="term" value="F:electron transporter, transferring electrons within cytochrome b6/f complex of photosystem II activity"/>
    <property type="evidence" value="ECO:0007669"/>
    <property type="project" value="UniProtKB-UniRule"/>
</dbReference>
<dbReference type="GO" id="GO:0017004">
    <property type="term" value="P:cytochrome complex assembly"/>
    <property type="evidence" value="ECO:0007669"/>
    <property type="project" value="UniProtKB-UniRule"/>
</dbReference>
<dbReference type="GO" id="GO:0015979">
    <property type="term" value="P:photosynthesis"/>
    <property type="evidence" value="ECO:0007669"/>
    <property type="project" value="UniProtKB-KW"/>
</dbReference>
<dbReference type="HAMAP" id="MF_00432">
    <property type="entry name" value="Cytb6_f_PetG"/>
    <property type="match status" value="1"/>
</dbReference>
<dbReference type="InterPro" id="IPR003683">
    <property type="entry name" value="Cyt_6/f_cplx_su5"/>
</dbReference>
<dbReference type="InterPro" id="IPR036099">
    <property type="entry name" value="Cyt_6/f_cplx_su5_sf"/>
</dbReference>
<dbReference type="NCBIfam" id="NF001907">
    <property type="entry name" value="PRK00665.1"/>
    <property type="match status" value="1"/>
</dbReference>
<dbReference type="Pfam" id="PF02529">
    <property type="entry name" value="PetG"/>
    <property type="match status" value="1"/>
</dbReference>
<dbReference type="PIRSF" id="PIRSF000034">
    <property type="entry name" value="Cyt_b6-f_V"/>
    <property type="match status" value="1"/>
</dbReference>
<dbReference type="SUPFAM" id="SSF103446">
    <property type="entry name" value="PetG subunit of the cytochrome b6f complex"/>
    <property type="match status" value="1"/>
</dbReference>
<protein>
    <recommendedName>
        <fullName evidence="1">Cytochrome b6-f complex subunit 5</fullName>
    </recommendedName>
    <alternativeName>
        <fullName evidence="1">Cytochrome b6-f complex subunit PetG</fullName>
    </alternativeName>
    <alternativeName>
        <fullName evidence="1">Cytochrome b6-f complex subunit V</fullName>
    </alternativeName>
</protein>
<keyword id="KW-0150">Chloroplast</keyword>
<keyword id="KW-0249">Electron transport</keyword>
<keyword id="KW-0472">Membrane</keyword>
<keyword id="KW-0602">Photosynthesis</keyword>
<keyword id="KW-0934">Plastid</keyword>
<keyword id="KW-1185">Reference proteome</keyword>
<keyword id="KW-0793">Thylakoid</keyword>
<keyword id="KW-0812">Transmembrane</keyword>
<keyword id="KW-1133">Transmembrane helix</keyword>
<keyword id="KW-0813">Transport</keyword>
<accession>P0C391</accession>
<accession>P12121</accession>
<accession>P32973</accession>
<accession>P69459</accession>
<accession>Q6QXZ8</accession>
<accession>Q6QY62</accession>
<proteinExistence type="inferred from homology"/>
<evidence type="ECO:0000255" key="1">
    <source>
        <dbReference type="HAMAP-Rule" id="MF_00432"/>
    </source>
</evidence>
<evidence type="ECO:0000305" key="2"/>
<organism>
    <name type="scientific">Oryza sativa subsp. indica</name>
    <name type="common">Rice</name>
    <dbReference type="NCBI Taxonomy" id="39946"/>
    <lineage>
        <taxon>Eukaryota</taxon>
        <taxon>Viridiplantae</taxon>
        <taxon>Streptophyta</taxon>
        <taxon>Embryophyta</taxon>
        <taxon>Tracheophyta</taxon>
        <taxon>Spermatophyta</taxon>
        <taxon>Magnoliopsida</taxon>
        <taxon>Liliopsida</taxon>
        <taxon>Poales</taxon>
        <taxon>Poaceae</taxon>
        <taxon>BOP clade</taxon>
        <taxon>Oryzoideae</taxon>
        <taxon>Oryzeae</taxon>
        <taxon>Oryzinae</taxon>
        <taxon>Oryza</taxon>
        <taxon>Oryza sativa</taxon>
    </lineage>
</organism>
<sequence>MIEVFLFGIVLGLIPITLAGLFVTAYLQYRRGDQLDL</sequence>
<name>PETG_ORYSI</name>
<comment type="function">
    <text evidence="1">Component of the cytochrome b6-f complex, which mediates electron transfer between photosystem II (PSII) and photosystem I (PSI), cyclic electron flow around PSI, and state transitions. PetG is required for either the stability or assembly of the cytochrome b6-f complex.</text>
</comment>
<comment type="subunit">
    <text evidence="1">The 4 large subunits of the cytochrome b6-f complex are cytochrome b6, subunit IV (17 kDa polypeptide, PetD), cytochrome f and the Rieske protein, while the 4 small subunits are PetG, PetL, PetM and PetN. The complex functions as a dimer.</text>
</comment>
<comment type="subcellular location">
    <subcellularLocation>
        <location evidence="1">Plastid</location>
        <location evidence="1">Chloroplast thylakoid membrane</location>
        <topology evidence="1">Single-pass membrane protein</topology>
    </subcellularLocation>
</comment>
<comment type="similarity">
    <text evidence="1">Belongs to the PetG family.</text>
</comment>
<comment type="sequence caution" evidence="2">
    <conflict type="erroneous initiation">
        <sequence resource="EMBL-CDS" id="AAS46067"/>
    </conflict>
</comment>